<name>ERT1_YEAST</name>
<sequence>MCTPDENDYKTSTDPDTSANTNHTLEKKKRKKRKNTNVACVNCSRLHVSCEAKRPCLRCISKGLTATCVDAPRKKSKYLAGIPNRELPMNIQPDLPPRKIMIPIYNNSSNSSLNVNNMGEQQKFTSPQHIVHKAKFLSNAADSEYSILSNIIYQDTLSNKIPIDILYSNTNSTSNSTIGNSSNNSPTGTNTSPEETEMEKIRQLYSEQRANIPPHPYPSSNQNVYSILLGPNSAKIVASQVNLFANHFPLVPVDSADNSLNFKRLLPRDPSEKSSQINWDSSINQYYLNSETVTFPELAIPLKRRKNHLVSVSLESCSPDAANIKSNVEWEHSLRYSTPMEIYTSINAPFSHTPGFHHLLVYLKHRFNQQDLVKMCRSIAEFRPIFIACSVTLTEEDMIFMEQCYQRTLLEYVKFIAQIGTPTCIWRRNGQISYVNEEFEILCGWTREELLNKMTFIVEIMDDESVRDYFKTLSKVAYRDFRGSEKMKVCRLLSPIKGKIIHCCCMWTLKRDVSGLPLMILGNFMPILN</sequence>
<proteinExistence type="evidence at protein level"/>
<gene>
    <name type="primary">ERT1</name>
    <name type="ordered locus">YBR239C</name>
    <name type="ORF">YBR1622</name>
</gene>
<feature type="chain" id="PRO_0000114993" description="Transcription activator of gluconeogenesis ERT1">
    <location>
        <begin position="1"/>
        <end position="529"/>
    </location>
</feature>
<feature type="domain" description="PAS" evidence="1">
    <location>
        <begin position="408"/>
        <end position="480"/>
    </location>
</feature>
<feature type="DNA-binding region" description="Zn(2)-C6 fungal-type" evidence="2">
    <location>
        <begin position="40"/>
        <end position="68"/>
    </location>
</feature>
<feature type="region of interest" description="Disordered" evidence="3">
    <location>
        <begin position="1"/>
        <end position="31"/>
    </location>
</feature>
<feature type="region of interest" description="Disordered" evidence="3">
    <location>
        <begin position="174"/>
        <end position="198"/>
    </location>
</feature>
<feature type="compositionally biased region" description="Polar residues" evidence="3">
    <location>
        <begin position="14"/>
        <end position="23"/>
    </location>
</feature>
<feature type="compositionally biased region" description="Low complexity" evidence="3">
    <location>
        <begin position="174"/>
        <end position="193"/>
    </location>
</feature>
<accession>P38140</accession>
<accession>D6VQN5</accession>
<reference key="1">
    <citation type="journal article" date="1994" name="EMBO J.">
        <title>Complete DNA sequence of yeast chromosome II.</title>
        <authorList>
            <person name="Feldmann H."/>
            <person name="Aigle M."/>
            <person name="Aljinovic G."/>
            <person name="Andre B."/>
            <person name="Baclet M.C."/>
            <person name="Barthe C."/>
            <person name="Baur A."/>
            <person name="Becam A.-M."/>
            <person name="Biteau N."/>
            <person name="Boles E."/>
            <person name="Brandt T."/>
            <person name="Brendel M."/>
            <person name="Brueckner M."/>
            <person name="Bussereau F."/>
            <person name="Christiansen C."/>
            <person name="Contreras R."/>
            <person name="Crouzet M."/>
            <person name="Cziepluch C."/>
            <person name="Demolis N."/>
            <person name="Delaveau T."/>
            <person name="Doignon F."/>
            <person name="Domdey H."/>
            <person name="Duesterhus S."/>
            <person name="Dubois E."/>
            <person name="Dujon B."/>
            <person name="El Bakkoury M."/>
            <person name="Entian K.-D."/>
            <person name="Feuermann M."/>
            <person name="Fiers W."/>
            <person name="Fobo G.M."/>
            <person name="Fritz C."/>
            <person name="Gassenhuber J."/>
            <person name="Glansdorff N."/>
            <person name="Goffeau A."/>
            <person name="Grivell L.A."/>
            <person name="de Haan M."/>
            <person name="Hein C."/>
            <person name="Herbert C.J."/>
            <person name="Hollenberg C.P."/>
            <person name="Holmstroem K."/>
            <person name="Jacq C."/>
            <person name="Jacquet M."/>
            <person name="Jauniaux J.-C."/>
            <person name="Jonniaux J.-L."/>
            <person name="Kallesoee T."/>
            <person name="Kiesau P."/>
            <person name="Kirchrath L."/>
            <person name="Koetter P."/>
            <person name="Korol S."/>
            <person name="Liebl S."/>
            <person name="Logghe M."/>
            <person name="Lohan A.J.E."/>
            <person name="Louis E.J."/>
            <person name="Li Z.Y."/>
            <person name="Maat M.J."/>
            <person name="Mallet L."/>
            <person name="Mannhaupt G."/>
            <person name="Messenguy F."/>
            <person name="Miosga T."/>
            <person name="Molemans F."/>
            <person name="Mueller S."/>
            <person name="Nasr F."/>
            <person name="Obermaier B."/>
            <person name="Perea J."/>
            <person name="Pierard A."/>
            <person name="Piravandi E."/>
            <person name="Pohl F.M."/>
            <person name="Pohl T.M."/>
            <person name="Potier S."/>
            <person name="Proft M."/>
            <person name="Purnelle B."/>
            <person name="Ramezani Rad M."/>
            <person name="Rieger M."/>
            <person name="Rose M."/>
            <person name="Schaaff-Gerstenschlaeger I."/>
            <person name="Scherens B."/>
            <person name="Schwarzlose C."/>
            <person name="Skala J."/>
            <person name="Slonimski P.P."/>
            <person name="Smits P.H.M."/>
            <person name="Souciet J.-L."/>
            <person name="Steensma H.Y."/>
            <person name="Stucka R."/>
            <person name="Urrestarazu L.A."/>
            <person name="van der Aart Q.J.M."/>
            <person name="Van Dyck L."/>
            <person name="Vassarotti A."/>
            <person name="Vetter I."/>
            <person name="Vierendeels F."/>
            <person name="Vissers S."/>
            <person name="Wagner G."/>
            <person name="de Wergifosse P."/>
            <person name="Wolfe K.H."/>
            <person name="Zagulski M."/>
            <person name="Zimmermann F.K."/>
            <person name="Mewes H.-W."/>
            <person name="Kleine K."/>
        </authorList>
    </citation>
    <scope>NUCLEOTIDE SEQUENCE [LARGE SCALE GENOMIC DNA]</scope>
    <source>
        <strain>ATCC 204508 / S288c</strain>
    </source>
</reference>
<reference key="2">
    <citation type="journal article" date="2014" name="G3 (Bethesda)">
        <title>The reference genome sequence of Saccharomyces cerevisiae: Then and now.</title>
        <authorList>
            <person name="Engel S.R."/>
            <person name="Dietrich F.S."/>
            <person name="Fisk D.G."/>
            <person name="Binkley G."/>
            <person name="Balakrishnan R."/>
            <person name="Costanzo M.C."/>
            <person name="Dwight S.S."/>
            <person name="Hitz B.C."/>
            <person name="Karra K."/>
            <person name="Nash R.S."/>
            <person name="Weng S."/>
            <person name="Wong E.D."/>
            <person name="Lloyd P."/>
            <person name="Skrzypek M.S."/>
            <person name="Miyasato S.R."/>
            <person name="Simison M."/>
            <person name="Cherry J.M."/>
        </authorList>
    </citation>
    <scope>GENOME REANNOTATION</scope>
    <source>
        <strain>ATCC 204508 / S288c</strain>
    </source>
</reference>
<reference key="3">
    <citation type="journal article" date="2003" name="Nature">
        <title>Global analysis of protein localization in budding yeast.</title>
        <authorList>
            <person name="Huh W.-K."/>
            <person name="Falvo J.V."/>
            <person name="Gerke L.C."/>
            <person name="Carroll A.S."/>
            <person name="Howson R.W."/>
            <person name="Weissman J.S."/>
            <person name="O'Shea E.K."/>
        </authorList>
    </citation>
    <scope>SUBCELLULAR LOCATION [LARGE SCALE ANALYSIS]</scope>
</reference>
<reference key="4">
    <citation type="journal article" date="2003" name="Nature">
        <title>Global analysis of protein expression in yeast.</title>
        <authorList>
            <person name="Ghaemmaghami S."/>
            <person name="Huh W.-K."/>
            <person name="Bower K."/>
            <person name="Howson R.W."/>
            <person name="Belle A."/>
            <person name="Dephoure N."/>
            <person name="O'Shea E.K."/>
            <person name="Weissman J.S."/>
        </authorList>
    </citation>
    <scope>LEVEL OF PROTEIN EXPRESSION [LARGE SCALE ANALYSIS]</scope>
</reference>
<reference key="5">
    <citation type="journal article" date="2007" name="Cold Spring Harb. Symp. Quant. Biol.">
        <title>Evolution of the clock from yeast to man by period-doubling folds in the cellular oscillator.</title>
        <authorList>
            <person name="Klevecz R.R."/>
            <person name="Li C.M."/>
        </authorList>
    </citation>
    <scope>DISRUPTION PHENOTYPE</scope>
</reference>
<reference key="6">
    <citation type="journal article" date="2008" name="Genetics">
        <title>Chromatin-associated genes protect the yeast genome from Ty1 insertional mutagenesis.</title>
        <authorList>
            <person name="Nyswaner K.M."/>
            <person name="Checkley M.A."/>
            <person name="Yi M."/>
            <person name="Stephens R.M."/>
            <person name="Garfinkel D.J."/>
        </authorList>
    </citation>
    <scope>FUNCTION</scope>
</reference>
<reference key="7">
    <citation type="journal article" date="2010" name="FEMS Yeast Res.">
        <title>Transcriptional regulation of nonfermentable carbon utilization in budding yeast.</title>
        <authorList>
            <person name="Turcotte B."/>
            <person name="Liang X.B."/>
            <person name="Robert F."/>
            <person name="Soontorngun N."/>
        </authorList>
    </citation>
    <scope>FUNCTION</scope>
</reference>
<dbReference type="EMBL" id="Z36108">
    <property type="protein sequence ID" value="CAA85202.1"/>
    <property type="molecule type" value="Genomic_DNA"/>
</dbReference>
<dbReference type="EMBL" id="BK006936">
    <property type="protein sequence ID" value="DAA07355.1"/>
    <property type="molecule type" value="Genomic_DNA"/>
</dbReference>
<dbReference type="PIR" id="S46116">
    <property type="entry name" value="S46116"/>
</dbReference>
<dbReference type="RefSeq" id="NP_009798.3">
    <property type="nucleotide sequence ID" value="NM_001178587.3"/>
</dbReference>
<dbReference type="SMR" id="P38140"/>
<dbReference type="BioGRID" id="32934">
    <property type="interactions" value="81"/>
</dbReference>
<dbReference type="DIP" id="DIP-4432N"/>
<dbReference type="FunCoup" id="P38140">
    <property type="interactions" value="353"/>
</dbReference>
<dbReference type="IntAct" id="P38140">
    <property type="interactions" value="8"/>
</dbReference>
<dbReference type="MINT" id="P38140"/>
<dbReference type="STRING" id="4932.YBR239C"/>
<dbReference type="iPTMnet" id="P38140"/>
<dbReference type="PaxDb" id="4932-YBR239C"/>
<dbReference type="PeptideAtlas" id="P38140"/>
<dbReference type="EnsemblFungi" id="YBR239C_mRNA">
    <property type="protein sequence ID" value="YBR239C"/>
    <property type="gene ID" value="YBR239C"/>
</dbReference>
<dbReference type="GeneID" id="852541"/>
<dbReference type="KEGG" id="sce:YBR239C"/>
<dbReference type="AGR" id="SGD:S000000443"/>
<dbReference type="SGD" id="S000000443">
    <property type="gene designation" value="ERT1"/>
</dbReference>
<dbReference type="VEuPathDB" id="FungiDB:YBR239C"/>
<dbReference type="eggNOG" id="ENOG502R1M5">
    <property type="taxonomic scope" value="Eukaryota"/>
</dbReference>
<dbReference type="GeneTree" id="ENSGT00940000176385"/>
<dbReference type="HOGENOM" id="CLU_010748_2_3_1"/>
<dbReference type="InParanoid" id="P38140"/>
<dbReference type="OMA" id="VMTTCKL"/>
<dbReference type="OrthoDB" id="2538135at2759"/>
<dbReference type="BioCyc" id="YEAST:G3O-29170-MONOMER"/>
<dbReference type="BioGRID-ORCS" id="852541">
    <property type="hits" value="1 hit in 13 CRISPR screens"/>
</dbReference>
<dbReference type="PRO" id="PR:P38140"/>
<dbReference type="Proteomes" id="UP000002311">
    <property type="component" value="Chromosome II"/>
</dbReference>
<dbReference type="RNAct" id="P38140">
    <property type="molecule type" value="protein"/>
</dbReference>
<dbReference type="GO" id="GO:0005737">
    <property type="term" value="C:cytoplasm"/>
    <property type="evidence" value="ECO:0007005"/>
    <property type="project" value="SGD"/>
</dbReference>
<dbReference type="GO" id="GO:0005634">
    <property type="term" value="C:nucleus"/>
    <property type="evidence" value="ECO:0007005"/>
    <property type="project" value="SGD"/>
</dbReference>
<dbReference type="GO" id="GO:0003700">
    <property type="term" value="F:DNA-binding transcription factor activity"/>
    <property type="evidence" value="ECO:0000318"/>
    <property type="project" value="GO_Central"/>
</dbReference>
<dbReference type="GO" id="GO:0001227">
    <property type="term" value="F:DNA-binding transcription repressor activity, RNA polymerase II-specific"/>
    <property type="evidence" value="ECO:0000315"/>
    <property type="project" value="SGD"/>
</dbReference>
<dbReference type="GO" id="GO:0000977">
    <property type="term" value="F:RNA polymerase II transcription regulatory region sequence-specific DNA binding"/>
    <property type="evidence" value="ECO:0000318"/>
    <property type="project" value="GO_Central"/>
</dbReference>
<dbReference type="GO" id="GO:0043565">
    <property type="term" value="F:sequence-specific DNA binding"/>
    <property type="evidence" value="ECO:0000314"/>
    <property type="project" value="SGD"/>
</dbReference>
<dbReference type="GO" id="GO:0008270">
    <property type="term" value="F:zinc ion binding"/>
    <property type="evidence" value="ECO:0007669"/>
    <property type="project" value="InterPro"/>
</dbReference>
<dbReference type="GO" id="GO:0045991">
    <property type="term" value="P:carbon catabolite activation of transcription"/>
    <property type="evidence" value="ECO:0000316"/>
    <property type="project" value="SGD"/>
</dbReference>
<dbReference type="GO" id="GO:0045013">
    <property type="term" value="P:carbon catabolite repression of transcription"/>
    <property type="evidence" value="ECO:0000315"/>
    <property type="project" value="SGD"/>
</dbReference>
<dbReference type="GO" id="GO:0009267">
    <property type="term" value="P:cellular response to starvation"/>
    <property type="evidence" value="ECO:0000318"/>
    <property type="project" value="GO_Central"/>
</dbReference>
<dbReference type="GO" id="GO:0006094">
    <property type="term" value="P:gluconeogenesis"/>
    <property type="evidence" value="ECO:0007669"/>
    <property type="project" value="UniProtKB-KW"/>
</dbReference>
<dbReference type="GO" id="GO:0000122">
    <property type="term" value="P:negative regulation of transcription by RNA polymerase II"/>
    <property type="evidence" value="ECO:0000315"/>
    <property type="project" value="SGD"/>
</dbReference>
<dbReference type="GO" id="GO:0045722">
    <property type="term" value="P:positive regulation of gluconeogenesis"/>
    <property type="evidence" value="ECO:0000316"/>
    <property type="project" value="SGD"/>
</dbReference>
<dbReference type="GO" id="GO:0045944">
    <property type="term" value="P:positive regulation of transcription by RNA polymerase II"/>
    <property type="evidence" value="ECO:0000316"/>
    <property type="project" value="SGD"/>
</dbReference>
<dbReference type="CDD" id="cd00067">
    <property type="entry name" value="GAL4"/>
    <property type="match status" value="1"/>
</dbReference>
<dbReference type="CDD" id="cd00130">
    <property type="entry name" value="PAS"/>
    <property type="match status" value="1"/>
</dbReference>
<dbReference type="Gene3D" id="3.30.450.20">
    <property type="entry name" value="PAS domain"/>
    <property type="match status" value="1"/>
</dbReference>
<dbReference type="InterPro" id="IPR050335">
    <property type="entry name" value="ERT1_acuK_gluconeogen_tf"/>
</dbReference>
<dbReference type="InterPro" id="IPR000014">
    <property type="entry name" value="PAS"/>
</dbReference>
<dbReference type="InterPro" id="IPR035965">
    <property type="entry name" value="PAS-like_dom_sf"/>
</dbReference>
<dbReference type="InterPro" id="IPR056751">
    <property type="entry name" value="PAS_13"/>
</dbReference>
<dbReference type="InterPro" id="IPR036864">
    <property type="entry name" value="Zn2-C6_fun-type_DNA-bd_sf"/>
</dbReference>
<dbReference type="InterPro" id="IPR001138">
    <property type="entry name" value="Zn2Cys6_DnaBD"/>
</dbReference>
<dbReference type="NCBIfam" id="TIGR00229">
    <property type="entry name" value="sensory_box"/>
    <property type="match status" value="1"/>
</dbReference>
<dbReference type="PANTHER" id="PTHR47659:SF1">
    <property type="entry name" value="TRANSCRIPTION ACTIVATOR OF GLUCONEOGENESIS ERT1"/>
    <property type="match status" value="1"/>
</dbReference>
<dbReference type="PANTHER" id="PTHR47659">
    <property type="entry name" value="ZN(II)2CYS6 TRANSCRIPTION FACTOR (EUROFUNG)-RELATED"/>
    <property type="match status" value="1"/>
</dbReference>
<dbReference type="Pfam" id="PF24990">
    <property type="entry name" value="PAS_13"/>
    <property type="match status" value="1"/>
</dbReference>
<dbReference type="Pfam" id="PF00172">
    <property type="entry name" value="Zn_clus"/>
    <property type="match status" value="1"/>
</dbReference>
<dbReference type="SMART" id="SM00066">
    <property type="entry name" value="GAL4"/>
    <property type="match status" value="1"/>
</dbReference>
<dbReference type="SMART" id="SM00091">
    <property type="entry name" value="PAS"/>
    <property type="match status" value="1"/>
</dbReference>
<dbReference type="SUPFAM" id="SSF55785">
    <property type="entry name" value="PYP-like sensor domain (PAS domain)"/>
    <property type="match status" value="1"/>
</dbReference>
<dbReference type="SUPFAM" id="SSF57701">
    <property type="entry name" value="Zn2/Cys6 DNA-binding domain"/>
    <property type="match status" value="1"/>
</dbReference>
<dbReference type="PROSITE" id="PS50112">
    <property type="entry name" value="PAS"/>
    <property type="match status" value="1"/>
</dbReference>
<dbReference type="PROSITE" id="PS00463">
    <property type="entry name" value="ZN2_CY6_FUNGAL_1"/>
    <property type="match status" value="1"/>
</dbReference>
<dbReference type="PROSITE" id="PS50048">
    <property type="entry name" value="ZN2_CY6_FUNGAL_2"/>
    <property type="match status" value="1"/>
</dbReference>
<evidence type="ECO:0000255" key="1">
    <source>
        <dbReference type="PROSITE-ProRule" id="PRU00140"/>
    </source>
</evidence>
<evidence type="ECO:0000255" key="2">
    <source>
        <dbReference type="PROSITE-ProRule" id="PRU00227"/>
    </source>
</evidence>
<evidence type="ECO:0000256" key="3">
    <source>
        <dbReference type="SAM" id="MobiDB-lite"/>
    </source>
</evidence>
<evidence type="ECO:0000269" key="4">
    <source>
    </source>
</evidence>
<evidence type="ECO:0000269" key="5">
    <source>
    </source>
</evidence>
<evidence type="ECO:0000269" key="6">
    <source>
    </source>
</evidence>
<evidence type="ECO:0000269" key="7">
    <source>
    </source>
</evidence>
<evidence type="ECO:0000269" key="8">
    <source>
    </source>
</evidence>
<evidence type="ECO:0000305" key="9"/>
<protein>
    <recommendedName>
        <fullName>Transcription activator of gluconeogenesis ERT1</fullName>
    </recommendedName>
    <alternativeName>
        <fullName>Ethanol regulator of translation 1</fullName>
    </alternativeName>
</protein>
<keyword id="KW-0010">Activator</keyword>
<keyword id="KW-0963">Cytoplasm</keyword>
<keyword id="KW-0238">DNA-binding</keyword>
<keyword id="KW-0312">Gluconeogenesis</keyword>
<keyword id="KW-0479">Metal-binding</keyword>
<keyword id="KW-0539">Nucleus</keyword>
<keyword id="KW-1185">Reference proteome</keyword>
<keyword id="KW-0804">Transcription</keyword>
<keyword id="KW-0805">Transcription regulation</keyword>
<keyword id="KW-0862">Zinc</keyword>
<comment type="function">
    <text evidence="6 8">Transcription factor which regulates nonfermentable carbon utilization. Activator of gluconeogenetic genes like PCK1. Involved in restriction of Ty1 transposition.</text>
</comment>
<comment type="interaction">
    <interactant intactId="EBI-21048">
        <id>P38140</id>
    </interactant>
    <interactant intactId="EBI-22980">
        <id>P43603</id>
        <label>LSB3</label>
    </interactant>
    <organismsDiffer>false</organismsDiffer>
    <experiments>3</experiments>
</comment>
<comment type="interaction">
    <interactant intactId="EBI-21048">
        <id>P38140</id>
    </interactant>
    <interactant intactId="EBI-29389">
        <id>P19541</id>
        <label>RDS2</label>
    </interactant>
    <organismsDiffer>false</organismsDiffer>
    <experiments>2</experiments>
</comment>
<comment type="interaction">
    <interactant intactId="EBI-21048">
        <id>P38140</id>
    </interactant>
    <interactant intactId="EBI-14500">
        <id>P39743</id>
        <label>RVS167</label>
    </interactant>
    <organismsDiffer>false</organismsDiffer>
    <experiments>4</experiments>
</comment>
<comment type="interaction">
    <interactant intactId="EBI-21048">
        <id>P38140</id>
    </interactant>
    <interactant intactId="EBI-24460">
        <id>P32793</id>
        <label>YSC84</label>
    </interactant>
    <organismsDiffer>false</organismsDiffer>
    <experiments>4</experiments>
</comment>
<comment type="subcellular location">
    <subcellularLocation>
        <location evidence="4">Cytoplasm</location>
    </subcellularLocation>
    <subcellularLocation>
        <location evidence="2 4">Nucleus</location>
    </subcellularLocation>
</comment>
<comment type="disruption phenotype">
    <text evidence="7">Increases the periodicity of transcriptional and metabolic oscillation.</text>
</comment>
<comment type="miscellaneous">
    <text evidence="5">Present with 85 molecules/cell in log phase SD medium.</text>
</comment>
<comment type="similarity">
    <text evidence="9">Belongs to the ERT1/acuK family.</text>
</comment>
<organism>
    <name type="scientific">Saccharomyces cerevisiae (strain ATCC 204508 / S288c)</name>
    <name type="common">Baker's yeast</name>
    <dbReference type="NCBI Taxonomy" id="559292"/>
    <lineage>
        <taxon>Eukaryota</taxon>
        <taxon>Fungi</taxon>
        <taxon>Dikarya</taxon>
        <taxon>Ascomycota</taxon>
        <taxon>Saccharomycotina</taxon>
        <taxon>Saccharomycetes</taxon>
        <taxon>Saccharomycetales</taxon>
        <taxon>Saccharomycetaceae</taxon>
        <taxon>Saccharomyces</taxon>
    </lineage>
</organism>